<dbReference type="EMBL" id="CU928160">
    <property type="protein sequence ID" value="CAQ98054.1"/>
    <property type="molecule type" value="Genomic_DNA"/>
</dbReference>
<dbReference type="RefSeq" id="WP_000072536.1">
    <property type="nucleotide sequence ID" value="NC_011741.1"/>
</dbReference>
<dbReference type="SMR" id="B7LX89"/>
<dbReference type="GeneID" id="93776258"/>
<dbReference type="KEGG" id="ecr:ECIAI1_1192"/>
<dbReference type="HOGENOM" id="CLU_067812_0_1_6"/>
<dbReference type="GO" id="GO:0000902">
    <property type="term" value="P:cell morphogenesis"/>
    <property type="evidence" value="ECO:0007669"/>
    <property type="project" value="InterPro"/>
</dbReference>
<dbReference type="GO" id="GO:0000917">
    <property type="term" value="P:division septum assembly"/>
    <property type="evidence" value="ECO:0007669"/>
    <property type="project" value="UniProtKB-KW"/>
</dbReference>
<dbReference type="GO" id="GO:0051302">
    <property type="term" value="P:regulation of cell division"/>
    <property type="evidence" value="ECO:0007669"/>
    <property type="project" value="InterPro"/>
</dbReference>
<dbReference type="GO" id="GO:1901891">
    <property type="term" value="P:regulation of cell septum assembly"/>
    <property type="evidence" value="ECO:0007669"/>
    <property type="project" value="InterPro"/>
</dbReference>
<dbReference type="FunFam" id="2.160.20.70:FF:000002">
    <property type="entry name" value="Probable septum site-determining protein MinC"/>
    <property type="match status" value="1"/>
</dbReference>
<dbReference type="Gene3D" id="2.160.20.70">
    <property type="match status" value="1"/>
</dbReference>
<dbReference type="Gene3D" id="3.30.70.260">
    <property type="match status" value="1"/>
</dbReference>
<dbReference type="HAMAP" id="MF_00267">
    <property type="entry name" value="MinC"/>
    <property type="match status" value="1"/>
</dbReference>
<dbReference type="InterPro" id="IPR016098">
    <property type="entry name" value="CAP/MinC_C"/>
</dbReference>
<dbReference type="InterPro" id="IPR013033">
    <property type="entry name" value="MinC"/>
</dbReference>
<dbReference type="InterPro" id="IPR036145">
    <property type="entry name" value="MinC_C_sf"/>
</dbReference>
<dbReference type="InterPro" id="IPR007874">
    <property type="entry name" value="MinC_N"/>
</dbReference>
<dbReference type="InterPro" id="IPR005526">
    <property type="entry name" value="Septum_form_inhib_MinC_C"/>
</dbReference>
<dbReference type="NCBIfam" id="TIGR01222">
    <property type="entry name" value="minC"/>
    <property type="match status" value="1"/>
</dbReference>
<dbReference type="PANTHER" id="PTHR34108">
    <property type="entry name" value="SEPTUM SITE-DETERMINING PROTEIN MINC"/>
    <property type="match status" value="1"/>
</dbReference>
<dbReference type="PANTHER" id="PTHR34108:SF1">
    <property type="entry name" value="SEPTUM SITE-DETERMINING PROTEIN MINC"/>
    <property type="match status" value="1"/>
</dbReference>
<dbReference type="Pfam" id="PF03775">
    <property type="entry name" value="MinC_C"/>
    <property type="match status" value="1"/>
</dbReference>
<dbReference type="Pfam" id="PF05209">
    <property type="entry name" value="MinC_N"/>
    <property type="match status" value="1"/>
</dbReference>
<dbReference type="SUPFAM" id="SSF63848">
    <property type="entry name" value="Cell-division inhibitor MinC, C-terminal domain"/>
    <property type="match status" value="1"/>
</dbReference>
<comment type="function">
    <text evidence="1">Cell division inhibitor that blocks the formation of polar Z ring septums. Rapidly oscillates between the poles of the cell to destabilize FtsZ filaments that have formed before they mature into polar Z rings. Prevents FtsZ polymerization.</text>
</comment>
<comment type="subunit">
    <text evidence="1">Interacts with MinD and FtsZ.</text>
</comment>
<comment type="similarity">
    <text evidence="1">Belongs to the MinC family.</text>
</comment>
<gene>
    <name evidence="1" type="primary">minC</name>
    <name type="ordered locus">ECIAI1_1192</name>
</gene>
<feature type="chain" id="PRO_1000191249" description="Probable septum site-determining protein MinC">
    <location>
        <begin position="1"/>
        <end position="231"/>
    </location>
</feature>
<feature type="region of interest" description="Disordered" evidence="2">
    <location>
        <begin position="102"/>
        <end position="125"/>
    </location>
</feature>
<accession>B7LX89</accession>
<keyword id="KW-0131">Cell cycle</keyword>
<keyword id="KW-0132">Cell division</keyword>
<keyword id="KW-0717">Septation</keyword>
<proteinExistence type="inferred from homology"/>
<evidence type="ECO:0000255" key="1">
    <source>
        <dbReference type="HAMAP-Rule" id="MF_00267"/>
    </source>
</evidence>
<evidence type="ECO:0000256" key="2">
    <source>
        <dbReference type="SAM" id="MobiDB-lite"/>
    </source>
</evidence>
<reference key="1">
    <citation type="journal article" date="2009" name="PLoS Genet.">
        <title>Organised genome dynamics in the Escherichia coli species results in highly diverse adaptive paths.</title>
        <authorList>
            <person name="Touchon M."/>
            <person name="Hoede C."/>
            <person name="Tenaillon O."/>
            <person name="Barbe V."/>
            <person name="Baeriswyl S."/>
            <person name="Bidet P."/>
            <person name="Bingen E."/>
            <person name="Bonacorsi S."/>
            <person name="Bouchier C."/>
            <person name="Bouvet O."/>
            <person name="Calteau A."/>
            <person name="Chiapello H."/>
            <person name="Clermont O."/>
            <person name="Cruveiller S."/>
            <person name="Danchin A."/>
            <person name="Diard M."/>
            <person name="Dossat C."/>
            <person name="Karoui M.E."/>
            <person name="Frapy E."/>
            <person name="Garry L."/>
            <person name="Ghigo J.M."/>
            <person name="Gilles A.M."/>
            <person name="Johnson J."/>
            <person name="Le Bouguenec C."/>
            <person name="Lescat M."/>
            <person name="Mangenot S."/>
            <person name="Martinez-Jehanne V."/>
            <person name="Matic I."/>
            <person name="Nassif X."/>
            <person name="Oztas S."/>
            <person name="Petit M.A."/>
            <person name="Pichon C."/>
            <person name="Rouy Z."/>
            <person name="Ruf C.S."/>
            <person name="Schneider D."/>
            <person name="Tourret J."/>
            <person name="Vacherie B."/>
            <person name="Vallenet D."/>
            <person name="Medigue C."/>
            <person name="Rocha E.P.C."/>
            <person name="Denamur E."/>
        </authorList>
    </citation>
    <scope>NUCLEOTIDE SEQUENCE [LARGE SCALE GENOMIC DNA]</scope>
    <source>
        <strain>IAI1</strain>
    </source>
</reference>
<sequence>MSNTPIELKGSSFTLSVVHLHEAEPKVIHQALEDKIAQAPAFLKHAPVVLNVSALEDPVNWSAMHKAVSATGLRVIGVSGCKDAQLKAEIEKMGLPILTEGKEKAPRPAPAPQAPAQNTTPVTKTRLIDTPVRSGQRIYAPQCDLIVTSHVSAGAELIADGNIHVYGMMRGRALAGASGDRETQIFCTNLMAELVSIAGEYWLSDQIPAEFYGKAARLQLVENALTVQPLN</sequence>
<organism>
    <name type="scientific">Escherichia coli O8 (strain IAI1)</name>
    <dbReference type="NCBI Taxonomy" id="585034"/>
    <lineage>
        <taxon>Bacteria</taxon>
        <taxon>Pseudomonadati</taxon>
        <taxon>Pseudomonadota</taxon>
        <taxon>Gammaproteobacteria</taxon>
        <taxon>Enterobacterales</taxon>
        <taxon>Enterobacteriaceae</taxon>
        <taxon>Escherichia</taxon>
    </lineage>
</organism>
<name>MINC_ECO8A</name>
<protein>
    <recommendedName>
        <fullName evidence="1">Probable septum site-determining protein MinC</fullName>
    </recommendedName>
</protein>